<gene>
    <name evidence="1" type="primary">rps2</name>
    <name type="ordered locus">MA_0600</name>
</gene>
<accession>Q8TT39</accession>
<dbReference type="EMBL" id="AE010299">
    <property type="protein sequence ID" value="AAM04044.1"/>
    <property type="status" value="ALT_INIT"/>
    <property type="molecule type" value="Genomic_DNA"/>
</dbReference>
<dbReference type="SMR" id="Q8TT39"/>
<dbReference type="FunCoup" id="Q8TT39">
    <property type="interactions" value="159"/>
</dbReference>
<dbReference type="STRING" id="188937.MA_0600"/>
<dbReference type="EnsemblBacteria" id="AAM04044">
    <property type="protein sequence ID" value="AAM04044"/>
    <property type="gene ID" value="MA_0600"/>
</dbReference>
<dbReference type="GeneID" id="1472492"/>
<dbReference type="KEGG" id="mac:MA_0600"/>
<dbReference type="HOGENOM" id="CLU_058171_3_0_2"/>
<dbReference type="InParanoid" id="Q8TT39"/>
<dbReference type="OrthoDB" id="371797at2157"/>
<dbReference type="PhylomeDB" id="Q8TT39"/>
<dbReference type="Proteomes" id="UP000002487">
    <property type="component" value="Chromosome"/>
</dbReference>
<dbReference type="GO" id="GO:0022627">
    <property type="term" value="C:cytosolic small ribosomal subunit"/>
    <property type="evidence" value="ECO:0000318"/>
    <property type="project" value="GO_Central"/>
</dbReference>
<dbReference type="GO" id="GO:0003735">
    <property type="term" value="F:structural constituent of ribosome"/>
    <property type="evidence" value="ECO:0000318"/>
    <property type="project" value="GO_Central"/>
</dbReference>
<dbReference type="GO" id="GO:0000028">
    <property type="term" value="P:ribosomal small subunit assembly"/>
    <property type="evidence" value="ECO:0000318"/>
    <property type="project" value="GO_Central"/>
</dbReference>
<dbReference type="GO" id="GO:0006412">
    <property type="term" value="P:translation"/>
    <property type="evidence" value="ECO:0000318"/>
    <property type="project" value="GO_Central"/>
</dbReference>
<dbReference type="FunFam" id="3.40.50.10490:FF:000030">
    <property type="entry name" value="30S ribosomal protein S2"/>
    <property type="match status" value="1"/>
</dbReference>
<dbReference type="Gene3D" id="3.40.50.10490">
    <property type="entry name" value="Glucose-6-phosphate isomerase like protein, domain 1"/>
    <property type="match status" value="1"/>
</dbReference>
<dbReference type="HAMAP" id="MF_00291_A">
    <property type="entry name" value="Ribosomal_uS2_A"/>
    <property type="match status" value="1"/>
</dbReference>
<dbReference type="InterPro" id="IPR001865">
    <property type="entry name" value="Ribosomal_uS2"/>
</dbReference>
<dbReference type="InterPro" id="IPR023454">
    <property type="entry name" value="Ribosomal_uS2_arc"/>
</dbReference>
<dbReference type="InterPro" id="IPR018130">
    <property type="entry name" value="Ribosomal_uS2_CS"/>
</dbReference>
<dbReference type="InterPro" id="IPR005707">
    <property type="entry name" value="Ribosomal_uS2_euk/arc"/>
</dbReference>
<dbReference type="InterPro" id="IPR023591">
    <property type="entry name" value="Ribosomal_uS2_flav_dom_sf"/>
</dbReference>
<dbReference type="NCBIfam" id="TIGR01012">
    <property type="entry name" value="uS2_euk_arch"/>
    <property type="match status" value="1"/>
</dbReference>
<dbReference type="PANTHER" id="PTHR11489">
    <property type="entry name" value="40S RIBOSOMAL PROTEIN SA"/>
    <property type="match status" value="1"/>
</dbReference>
<dbReference type="Pfam" id="PF00318">
    <property type="entry name" value="Ribosomal_S2"/>
    <property type="match status" value="2"/>
</dbReference>
<dbReference type="PRINTS" id="PR00395">
    <property type="entry name" value="RIBOSOMALS2"/>
</dbReference>
<dbReference type="SUPFAM" id="SSF52313">
    <property type="entry name" value="Ribosomal protein S2"/>
    <property type="match status" value="1"/>
</dbReference>
<dbReference type="PROSITE" id="PS00962">
    <property type="entry name" value="RIBOSOMAL_S2_1"/>
    <property type="match status" value="1"/>
</dbReference>
<dbReference type="PROSITE" id="PS00963">
    <property type="entry name" value="RIBOSOMAL_S2_2"/>
    <property type="match status" value="1"/>
</dbReference>
<reference key="1">
    <citation type="journal article" date="2002" name="Genome Res.">
        <title>The genome of Methanosarcina acetivorans reveals extensive metabolic and physiological diversity.</title>
        <authorList>
            <person name="Galagan J.E."/>
            <person name="Nusbaum C."/>
            <person name="Roy A."/>
            <person name="Endrizzi M.G."/>
            <person name="Macdonald P."/>
            <person name="FitzHugh W."/>
            <person name="Calvo S."/>
            <person name="Engels R."/>
            <person name="Smirnov S."/>
            <person name="Atnoor D."/>
            <person name="Brown A."/>
            <person name="Allen N."/>
            <person name="Naylor J."/>
            <person name="Stange-Thomann N."/>
            <person name="DeArellano K."/>
            <person name="Johnson R."/>
            <person name="Linton L."/>
            <person name="McEwan P."/>
            <person name="McKernan K."/>
            <person name="Talamas J."/>
            <person name="Tirrell A."/>
            <person name="Ye W."/>
            <person name="Zimmer A."/>
            <person name="Barber R.D."/>
            <person name="Cann I."/>
            <person name="Graham D.E."/>
            <person name="Grahame D.A."/>
            <person name="Guss A.M."/>
            <person name="Hedderich R."/>
            <person name="Ingram-Smith C."/>
            <person name="Kuettner H.C."/>
            <person name="Krzycki J.A."/>
            <person name="Leigh J.A."/>
            <person name="Li W."/>
            <person name="Liu J."/>
            <person name="Mukhopadhyay B."/>
            <person name="Reeve J.N."/>
            <person name="Smith K."/>
            <person name="Springer T.A."/>
            <person name="Umayam L.A."/>
            <person name="White O."/>
            <person name="White R.H."/>
            <person name="de Macario E.C."/>
            <person name="Ferry J.G."/>
            <person name="Jarrell K.F."/>
            <person name="Jing H."/>
            <person name="Macario A.J.L."/>
            <person name="Paulsen I.T."/>
            <person name="Pritchett M."/>
            <person name="Sowers K.R."/>
            <person name="Swanson R.V."/>
            <person name="Zinder S.H."/>
            <person name="Lander E."/>
            <person name="Metcalf W.W."/>
            <person name="Birren B."/>
        </authorList>
    </citation>
    <scope>NUCLEOTIDE SEQUENCE [LARGE SCALE GENOMIC DNA]</scope>
    <source>
        <strain>ATCC 35395 / DSM 2834 / JCM 12185 / C2A</strain>
    </source>
</reference>
<feature type="chain" id="PRO_0000134322" description="Small ribosomal subunit protein uS2">
    <location>
        <begin position="1"/>
        <end position="225"/>
    </location>
</feature>
<feature type="region of interest" description="Disordered" evidence="2">
    <location>
        <begin position="1"/>
        <end position="33"/>
    </location>
</feature>
<feature type="compositionally biased region" description="Basic and acidic residues" evidence="2">
    <location>
        <begin position="1"/>
        <end position="13"/>
    </location>
</feature>
<name>RS2_METAC</name>
<protein>
    <recommendedName>
        <fullName evidence="1">Small ribosomal subunit protein uS2</fullName>
    </recommendedName>
    <alternativeName>
        <fullName evidence="3">30S ribosomal protein S2</fullName>
    </alternativeName>
</protein>
<organism>
    <name type="scientific">Methanosarcina acetivorans (strain ATCC 35395 / DSM 2834 / JCM 12185 / C2A)</name>
    <dbReference type="NCBI Taxonomy" id="188937"/>
    <lineage>
        <taxon>Archaea</taxon>
        <taxon>Methanobacteriati</taxon>
        <taxon>Methanobacteriota</taxon>
        <taxon>Stenosarchaea group</taxon>
        <taxon>Methanomicrobia</taxon>
        <taxon>Methanosarcinales</taxon>
        <taxon>Methanosarcinaceae</taxon>
        <taxon>Methanosarcina</taxon>
    </lineage>
</organism>
<keyword id="KW-1185">Reference proteome</keyword>
<keyword id="KW-0687">Ribonucleoprotein</keyword>
<keyword id="KW-0689">Ribosomal protein</keyword>
<sequence length="225" mass="24779">MAEAKPALEKEAAVKTGSIPSESEDETASHKEGSTSLVSIDEYLAAGVHIGTQQKTQDMMRFVYRVRTDGLYVLDIQSTDERIRVASKLLSHYDPARILVVSSRQYGQHPARMFSRALGTRAMLGRFIPGSLTNPQIHGFFEPDVIIVTDPAGDAQVLKEASSIGVPVVALCDTNNLTSNVDLVIPTNNKGRKALSLVYWLLAREVSRLNDTPFNYELTDFETPL</sequence>
<comment type="similarity">
    <text evidence="1">Belongs to the universal ribosomal protein uS2 family.</text>
</comment>
<comment type="sequence caution" evidence="3">
    <conflict type="erroneous initiation">
        <sequence resource="EMBL-CDS" id="AAM04044"/>
    </conflict>
</comment>
<proteinExistence type="inferred from homology"/>
<evidence type="ECO:0000255" key="1">
    <source>
        <dbReference type="HAMAP-Rule" id="MF_00291"/>
    </source>
</evidence>
<evidence type="ECO:0000256" key="2">
    <source>
        <dbReference type="SAM" id="MobiDB-lite"/>
    </source>
</evidence>
<evidence type="ECO:0000305" key="3"/>